<proteinExistence type="evidence at transcript level"/>
<accession>Q28I33</accession>
<protein>
    <recommendedName>
        <fullName>Glycosyltransferase 8 domain-containing protein 1</fullName>
        <ecNumber>2.4.1.-</ecNumber>
    </recommendedName>
</protein>
<gene>
    <name type="primary">glt8d1</name>
    <name type="ORF">TEgg066e07.1</name>
</gene>
<evidence type="ECO:0000255" key="1"/>
<evidence type="ECO:0000305" key="2"/>
<sequence>MSFRKVHIAIILLAAVVFLLILHHNILGLTDILTRQSSDSAPLVFQRLEALRDAHESPPEERQGEEIAVVIPGVEERLGGLVAAINSISSNTKSNVVFYIITTNDTKGHIRSWLDGTGLKRVTYKLLAFDTRVLDGKVRVDAGAEPVKPMTFARFYLPNLLPETKKAIYLDDDVIVQDDIRDLYNTPLRPGHAAAFSDDCDSVTSKFPVRGAANQYNYIGFLDYKKERIRSLGMRANTCSFNPGVFVANLTEWRRQNVTRQLEKWMELDVAEELYSKTLSASITAPPLLIVFYQRHSNLDPLWHVRHLGSSSGKRYSPQFVKAAKLLHWNGHFKPWGRTSSYPEVWEKWFIPDPMGQFAPIRRHGEADGTK</sequence>
<feature type="chain" id="PRO_0000288533" description="Glycosyltransferase 8 domain-containing protein 1">
    <location>
        <begin position="1"/>
        <end position="371"/>
    </location>
</feature>
<feature type="topological domain" description="Cytoplasmic" evidence="1">
    <location>
        <begin position="1"/>
        <end position="7"/>
    </location>
</feature>
<feature type="transmembrane region" description="Helical; Signal-anchor for type II membrane protein" evidence="1">
    <location>
        <begin position="8"/>
        <end position="28"/>
    </location>
</feature>
<feature type="topological domain" description="Lumenal" evidence="1">
    <location>
        <begin position="29"/>
        <end position="371"/>
    </location>
</feature>
<feature type="glycosylation site" description="N-linked (GlcNAc...) asparagine" evidence="1">
    <location>
        <position position="104"/>
    </location>
</feature>
<feature type="glycosylation site" description="N-linked (GlcNAc...) asparagine" evidence="1">
    <location>
        <position position="249"/>
    </location>
</feature>
<feature type="glycosylation site" description="N-linked (GlcNAc...) asparagine" evidence="1">
    <location>
        <position position="257"/>
    </location>
</feature>
<organism>
    <name type="scientific">Xenopus tropicalis</name>
    <name type="common">Western clawed frog</name>
    <name type="synonym">Silurana tropicalis</name>
    <dbReference type="NCBI Taxonomy" id="8364"/>
    <lineage>
        <taxon>Eukaryota</taxon>
        <taxon>Metazoa</taxon>
        <taxon>Chordata</taxon>
        <taxon>Craniata</taxon>
        <taxon>Vertebrata</taxon>
        <taxon>Euteleostomi</taxon>
        <taxon>Amphibia</taxon>
        <taxon>Batrachia</taxon>
        <taxon>Anura</taxon>
        <taxon>Pipoidea</taxon>
        <taxon>Pipidae</taxon>
        <taxon>Xenopodinae</taxon>
        <taxon>Xenopus</taxon>
        <taxon>Silurana</taxon>
    </lineage>
</organism>
<reference key="1">
    <citation type="submission" date="2006-10" db="EMBL/GenBank/DDBJ databases">
        <authorList>
            <consortium name="Sanger Xenopus tropicalis EST/cDNA project"/>
        </authorList>
    </citation>
    <scope>NUCLEOTIDE SEQUENCE [LARGE SCALE MRNA]</scope>
    <source>
        <tissue>Egg</tissue>
    </source>
</reference>
<name>GL8D1_XENTR</name>
<dbReference type="EC" id="2.4.1.-"/>
<dbReference type="EMBL" id="CR760617">
    <property type="protein sequence ID" value="CAJ81732.1"/>
    <property type="molecule type" value="mRNA"/>
</dbReference>
<dbReference type="RefSeq" id="NP_001016586.1">
    <property type="nucleotide sequence ID" value="NM_001016586.2"/>
</dbReference>
<dbReference type="SMR" id="Q28I33"/>
<dbReference type="FunCoup" id="Q28I33">
    <property type="interactions" value="774"/>
</dbReference>
<dbReference type="CAZy" id="GT8">
    <property type="family name" value="Glycosyltransferase Family 8"/>
</dbReference>
<dbReference type="GlyCosmos" id="Q28I33">
    <property type="glycosylation" value="3 sites, No reported glycans"/>
</dbReference>
<dbReference type="GeneID" id="549340"/>
<dbReference type="KEGG" id="xtr:549340"/>
<dbReference type="CTD" id="55830"/>
<dbReference type="Xenbase" id="XB-GENE-6454004">
    <property type="gene designation" value="glt8d1"/>
</dbReference>
<dbReference type="InParanoid" id="Q28I33"/>
<dbReference type="OrthoDB" id="411524at2759"/>
<dbReference type="Proteomes" id="UP000008143">
    <property type="component" value="Chromosome 4"/>
</dbReference>
<dbReference type="GO" id="GO:0016020">
    <property type="term" value="C:membrane"/>
    <property type="evidence" value="ECO:0007669"/>
    <property type="project" value="UniProtKB-SubCell"/>
</dbReference>
<dbReference type="GO" id="GO:0008194">
    <property type="term" value="F:UDP-glycosyltransferase activity"/>
    <property type="evidence" value="ECO:0007669"/>
    <property type="project" value="UniProtKB-ARBA"/>
</dbReference>
<dbReference type="CDD" id="cd06429">
    <property type="entry name" value="GT8_like_1"/>
    <property type="match status" value="1"/>
</dbReference>
<dbReference type="Gene3D" id="3.90.550.10">
    <property type="entry name" value="Spore Coat Polysaccharide Biosynthesis Protein SpsA, Chain A"/>
    <property type="match status" value="1"/>
</dbReference>
<dbReference type="InterPro" id="IPR002495">
    <property type="entry name" value="Glyco_trans_8"/>
</dbReference>
<dbReference type="InterPro" id="IPR050748">
    <property type="entry name" value="Glycosyltrans_8_dom-fam"/>
</dbReference>
<dbReference type="InterPro" id="IPR029044">
    <property type="entry name" value="Nucleotide-diphossugar_trans"/>
</dbReference>
<dbReference type="PANTHER" id="PTHR13778">
    <property type="entry name" value="GLYCOSYLTRANSFERASE 8 DOMAIN-CONTAINING PROTEIN"/>
    <property type="match status" value="1"/>
</dbReference>
<dbReference type="PANTHER" id="PTHR13778:SF3">
    <property type="entry name" value="GLYCOSYLTRANSFERASE 8 DOMAIN-CONTAINING PROTEIN 1"/>
    <property type="match status" value="1"/>
</dbReference>
<dbReference type="Pfam" id="PF01501">
    <property type="entry name" value="Glyco_transf_8"/>
    <property type="match status" value="1"/>
</dbReference>
<dbReference type="SUPFAM" id="SSF53448">
    <property type="entry name" value="Nucleotide-diphospho-sugar transferases"/>
    <property type="match status" value="1"/>
</dbReference>
<keyword id="KW-0325">Glycoprotein</keyword>
<keyword id="KW-0328">Glycosyltransferase</keyword>
<keyword id="KW-0472">Membrane</keyword>
<keyword id="KW-1185">Reference proteome</keyword>
<keyword id="KW-0735">Signal-anchor</keyword>
<keyword id="KW-0808">Transferase</keyword>
<keyword id="KW-0812">Transmembrane</keyword>
<keyword id="KW-1133">Transmembrane helix</keyword>
<comment type="subcellular location">
    <subcellularLocation>
        <location evidence="2">Membrane</location>
        <topology evidence="2">Single-pass type II membrane protein</topology>
    </subcellularLocation>
</comment>
<comment type="similarity">
    <text evidence="2">Belongs to the glycosyltransferase 8 family.</text>
</comment>